<sequence>MKKQQRLVMRTVILLLLLAALGYTIYANFFTEKTAVAVGSTAPDFVLSDLEGREHRLTDYRGKGVFLNFWGTWCKPCEREMPYMNELYPIYQKQGVEILAVNVGEPKLNVEKFAERFGLTFPIVIDRQDQVLNAYGVGPLPTTFLIDKNGKVKKIITGTMTKEDIKQHLESIKP</sequence>
<keyword id="KW-1003">Cell membrane</keyword>
<keyword id="KW-0201">Cytochrome c-type biogenesis</keyword>
<keyword id="KW-1015">Disulfide bond</keyword>
<keyword id="KW-0472">Membrane</keyword>
<keyword id="KW-0560">Oxidoreductase</keyword>
<keyword id="KW-0676">Redox-active center</keyword>
<keyword id="KW-0735">Signal-anchor</keyword>
<keyword id="KW-0812">Transmembrane</keyword>
<keyword id="KW-1133">Transmembrane helix</keyword>
<reference key="1">
    <citation type="journal article" date="2007" name="Proc. Natl. Acad. Sci. U.S.A.">
        <title>Genome and proteome of long-chain alkane degrading Geobacillus thermodenitrificans NG80-2 isolated from a deep-subsurface oil reservoir.</title>
        <authorList>
            <person name="Feng L."/>
            <person name="Wang W."/>
            <person name="Cheng J."/>
            <person name="Ren Y."/>
            <person name="Zhao G."/>
            <person name="Gao C."/>
            <person name="Tang Y."/>
            <person name="Liu X."/>
            <person name="Han W."/>
            <person name="Peng X."/>
            <person name="Liu R."/>
            <person name="Wang L."/>
        </authorList>
    </citation>
    <scope>NUCLEOTIDE SEQUENCE [LARGE SCALE GENOMIC DNA]</scope>
    <source>
        <strain>NG80-2</strain>
    </source>
</reference>
<organism>
    <name type="scientific">Geobacillus thermodenitrificans (strain NG80-2)</name>
    <dbReference type="NCBI Taxonomy" id="420246"/>
    <lineage>
        <taxon>Bacteria</taxon>
        <taxon>Bacillati</taxon>
        <taxon>Bacillota</taxon>
        <taxon>Bacilli</taxon>
        <taxon>Bacillales</taxon>
        <taxon>Anoxybacillaceae</taxon>
        <taxon>Geobacillus</taxon>
    </lineage>
</organism>
<accession>A4IQF5</accession>
<evidence type="ECO:0000255" key="1">
    <source>
        <dbReference type="HAMAP-Rule" id="MF_01319"/>
    </source>
</evidence>
<proteinExistence type="inferred from homology"/>
<feature type="chain" id="PRO_0000308272" description="Thiol-disulfide oxidoreductase ResA">
    <location>
        <begin position="1"/>
        <end position="174"/>
    </location>
</feature>
<feature type="transmembrane region" description="Helical; Signal-anchor for type II membrane protein" evidence="1">
    <location>
        <begin position="11"/>
        <end position="30"/>
    </location>
</feature>
<feature type="domain" description="Thioredoxin" evidence="1">
    <location>
        <begin position="36"/>
        <end position="174"/>
    </location>
</feature>
<feature type="disulfide bond" description="Redox-active" evidence="1">
    <location>
        <begin position="74"/>
        <end position="77"/>
    </location>
</feature>
<protein>
    <recommendedName>
        <fullName evidence="1">Thiol-disulfide oxidoreductase ResA</fullName>
    </recommendedName>
</protein>
<gene>
    <name evidence="1" type="primary">resA</name>
    <name type="ordered locus">GTNG_2210</name>
</gene>
<comment type="function">
    <text evidence="1">Thiol-disulfide oxidoreductase which is required in disulfide reduction during c-type cytochrome synthesis. May accept reducing equivalents from CcdA, leading to breakage of disulfide bonds in apocytochrome c; following this reduction heme can be covalently attached.</text>
</comment>
<comment type="pathway">
    <text evidence="1">Protein modification; cytochrome c assembly.</text>
</comment>
<comment type="subcellular location">
    <subcellularLocation>
        <location evidence="1">Cell membrane</location>
        <topology evidence="1">Single-pass type II membrane protein</topology>
    </subcellularLocation>
    <text evidence="1">The thioredoxin-like motif is exposed on the outside of the membrane.</text>
</comment>
<comment type="similarity">
    <text evidence="1">Belongs to the thioredoxin family. ResA subfamily.</text>
</comment>
<name>RESA_GEOTN</name>
<dbReference type="EMBL" id="CP000557">
    <property type="protein sequence ID" value="ABO67559.1"/>
    <property type="molecule type" value="Genomic_DNA"/>
</dbReference>
<dbReference type="RefSeq" id="WP_011887723.1">
    <property type="nucleotide sequence ID" value="NC_009328.1"/>
</dbReference>
<dbReference type="SMR" id="A4IQF5"/>
<dbReference type="KEGG" id="gtn:GTNG_2210"/>
<dbReference type="eggNOG" id="COG0526">
    <property type="taxonomic scope" value="Bacteria"/>
</dbReference>
<dbReference type="HOGENOM" id="CLU_042529_11_2_9"/>
<dbReference type="UniPathway" id="UPA00555"/>
<dbReference type="Proteomes" id="UP000001578">
    <property type="component" value="Chromosome"/>
</dbReference>
<dbReference type="GO" id="GO:0005886">
    <property type="term" value="C:plasma membrane"/>
    <property type="evidence" value="ECO:0007669"/>
    <property type="project" value="UniProtKB-SubCell"/>
</dbReference>
<dbReference type="GO" id="GO:0016209">
    <property type="term" value="F:antioxidant activity"/>
    <property type="evidence" value="ECO:0007669"/>
    <property type="project" value="InterPro"/>
</dbReference>
<dbReference type="GO" id="GO:0015036">
    <property type="term" value="F:disulfide oxidoreductase activity"/>
    <property type="evidence" value="ECO:0007669"/>
    <property type="project" value="UniProtKB-UniRule"/>
</dbReference>
<dbReference type="GO" id="GO:0017004">
    <property type="term" value="P:cytochrome complex assembly"/>
    <property type="evidence" value="ECO:0007669"/>
    <property type="project" value="UniProtKB-UniRule"/>
</dbReference>
<dbReference type="CDD" id="cd02966">
    <property type="entry name" value="TlpA_like_family"/>
    <property type="match status" value="1"/>
</dbReference>
<dbReference type="Gene3D" id="3.40.30.10">
    <property type="entry name" value="Glutaredoxin"/>
    <property type="match status" value="1"/>
</dbReference>
<dbReference type="HAMAP" id="MF_01319">
    <property type="entry name" value="ResA"/>
    <property type="match status" value="1"/>
</dbReference>
<dbReference type="InterPro" id="IPR000866">
    <property type="entry name" value="AhpC/TSA"/>
</dbReference>
<dbReference type="InterPro" id="IPR023555">
    <property type="entry name" value="Thiol-dS_OxRdtase_ResA"/>
</dbReference>
<dbReference type="InterPro" id="IPR036249">
    <property type="entry name" value="Thioredoxin-like_sf"/>
</dbReference>
<dbReference type="InterPro" id="IPR013766">
    <property type="entry name" value="Thioredoxin_domain"/>
</dbReference>
<dbReference type="InterPro" id="IPR050553">
    <property type="entry name" value="Thioredoxin_ResA/DsbE_sf"/>
</dbReference>
<dbReference type="NCBIfam" id="NF002854">
    <property type="entry name" value="PRK03147.1"/>
    <property type="match status" value="1"/>
</dbReference>
<dbReference type="PANTHER" id="PTHR42852">
    <property type="entry name" value="THIOL:DISULFIDE INTERCHANGE PROTEIN DSBE"/>
    <property type="match status" value="1"/>
</dbReference>
<dbReference type="PANTHER" id="PTHR42852:SF6">
    <property type="entry name" value="THIOL:DISULFIDE INTERCHANGE PROTEIN DSBE"/>
    <property type="match status" value="1"/>
</dbReference>
<dbReference type="Pfam" id="PF00578">
    <property type="entry name" value="AhpC-TSA"/>
    <property type="match status" value="1"/>
</dbReference>
<dbReference type="SUPFAM" id="SSF52833">
    <property type="entry name" value="Thioredoxin-like"/>
    <property type="match status" value="1"/>
</dbReference>
<dbReference type="PROSITE" id="PS51352">
    <property type="entry name" value="THIOREDOXIN_2"/>
    <property type="match status" value="1"/>
</dbReference>